<protein>
    <recommendedName>
        <fullName>REST corepressor 1</fullName>
    </recommendedName>
    <alternativeName>
        <fullName>Protein CoREST</fullName>
    </alternativeName>
</protein>
<proteinExistence type="evidence at protein level"/>
<organism>
    <name type="scientific">Homo sapiens</name>
    <name type="common">Human</name>
    <dbReference type="NCBI Taxonomy" id="9606"/>
    <lineage>
        <taxon>Eukaryota</taxon>
        <taxon>Metazoa</taxon>
        <taxon>Chordata</taxon>
        <taxon>Craniata</taxon>
        <taxon>Vertebrata</taxon>
        <taxon>Euteleostomi</taxon>
        <taxon>Mammalia</taxon>
        <taxon>Eutheria</taxon>
        <taxon>Euarchontoglires</taxon>
        <taxon>Primates</taxon>
        <taxon>Haplorrhini</taxon>
        <taxon>Catarrhini</taxon>
        <taxon>Hominidae</taxon>
        <taxon>Homo</taxon>
    </lineage>
</organism>
<reference key="1">
    <citation type="journal article" date="2003" name="Nature">
        <title>The DNA sequence and analysis of human chromosome 14.</title>
        <authorList>
            <person name="Heilig R."/>
            <person name="Eckenberg R."/>
            <person name="Petit J.-L."/>
            <person name="Fonknechten N."/>
            <person name="Da Silva C."/>
            <person name="Cattolico L."/>
            <person name="Levy M."/>
            <person name="Barbe V."/>
            <person name="De Berardinis V."/>
            <person name="Ureta-Vidal A."/>
            <person name="Pelletier E."/>
            <person name="Vico V."/>
            <person name="Anthouard V."/>
            <person name="Rowen L."/>
            <person name="Madan A."/>
            <person name="Qin S."/>
            <person name="Sun H."/>
            <person name="Du H."/>
            <person name="Pepin K."/>
            <person name="Artiguenave F."/>
            <person name="Robert C."/>
            <person name="Cruaud C."/>
            <person name="Bruels T."/>
            <person name="Jaillon O."/>
            <person name="Friedlander L."/>
            <person name="Samson G."/>
            <person name="Brottier P."/>
            <person name="Cure S."/>
            <person name="Segurens B."/>
            <person name="Aniere F."/>
            <person name="Samain S."/>
            <person name="Crespeau H."/>
            <person name="Abbasi N."/>
            <person name="Aiach N."/>
            <person name="Boscus D."/>
            <person name="Dickhoff R."/>
            <person name="Dors M."/>
            <person name="Dubois I."/>
            <person name="Friedman C."/>
            <person name="Gouyvenoux M."/>
            <person name="James R."/>
            <person name="Madan A."/>
            <person name="Mairey-Estrada B."/>
            <person name="Mangenot S."/>
            <person name="Martins N."/>
            <person name="Menard M."/>
            <person name="Oztas S."/>
            <person name="Ratcliffe A."/>
            <person name="Shaffer T."/>
            <person name="Trask B."/>
            <person name="Vacherie B."/>
            <person name="Bellemere C."/>
            <person name="Belser C."/>
            <person name="Besnard-Gonnet M."/>
            <person name="Bartol-Mavel D."/>
            <person name="Boutard M."/>
            <person name="Briez-Silla S."/>
            <person name="Combette S."/>
            <person name="Dufosse-Laurent V."/>
            <person name="Ferron C."/>
            <person name="Lechaplais C."/>
            <person name="Louesse C."/>
            <person name="Muselet D."/>
            <person name="Magdelenat G."/>
            <person name="Pateau E."/>
            <person name="Petit E."/>
            <person name="Sirvain-Trukniewicz P."/>
            <person name="Trybou A."/>
            <person name="Vega-Czarny N."/>
            <person name="Bataille E."/>
            <person name="Bluet E."/>
            <person name="Bordelais I."/>
            <person name="Dubois M."/>
            <person name="Dumont C."/>
            <person name="Guerin T."/>
            <person name="Haffray S."/>
            <person name="Hammadi R."/>
            <person name="Muanga J."/>
            <person name="Pellouin V."/>
            <person name="Robert D."/>
            <person name="Wunderle E."/>
            <person name="Gauguet G."/>
            <person name="Roy A."/>
            <person name="Sainte-Marthe L."/>
            <person name="Verdier J."/>
            <person name="Verdier-Discala C."/>
            <person name="Hillier L.W."/>
            <person name="Fulton L."/>
            <person name="McPherson J."/>
            <person name="Matsuda F."/>
            <person name="Wilson R."/>
            <person name="Scarpelli C."/>
            <person name="Gyapay G."/>
            <person name="Wincker P."/>
            <person name="Saurin W."/>
            <person name="Quetier F."/>
            <person name="Waterston R."/>
            <person name="Hood L."/>
            <person name="Weissenbach J."/>
        </authorList>
    </citation>
    <scope>NUCLEOTIDE SEQUENCE [LARGE SCALE GENOMIC DNA]</scope>
</reference>
<reference key="2">
    <citation type="submission" date="2005-07" db="EMBL/GenBank/DDBJ databases">
        <authorList>
            <person name="Mural R.J."/>
            <person name="Istrail S."/>
            <person name="Sutton G.G."/>
            <person name="Florea L."/>
            <person name="Halpern A.L."/>
            <person name="Mobarry C.M."/>
            <person name="Lippert R."/>
            <person name="Walenz B."/>
            <person name="Shatkay H."/>
            <person name="Dew I."/>
            <person name="Miller J.R."/>
            <person name="Flanigan M.J."/>
            <person name="Edwards N.J."/>
            <person name="Bolanos R."/>
            <person name="Fasulo D."/>
            <person name="Halldorsson B.V."/>
            <person name="Hannenhalli S."/>
            <person name="Turner R."/>
            <person name="Yooseph S."/>
            <person name="Lu F."/>
            <person name="Nusskern D.R."/>
            <person name="Shue B.C."/>
            <person name="Zheng X.H."/>
            <person name="Zhong F."/>
            <person name="Delcher A.L."/>
            <person name="Huson D.H."/>
            <person name="Kravitz S.A."/>
            <person name="Mouchard L."/>
            <person name="Reinert K."/>
            <person name="Remington K.A."/>
            <person name="Clark A.G."/>
            <person name="Waterman M.S."/>
            <person name="Eichler E.E."/>
            <person name="Adams M.D."/>
            <person name="Hunkapiller M.W."/>
            <person name="Myers E.W."/>
            <person name="Venter J.C."/>
        </authorList>
    </citation>
    <scope>NUCLEOTIDE SEQUENCE [LARGE SCALE GENOMIC DNA]</scope>
</reference>
<reference key="3">
    <citation type="journal article" date="2004" name="Genome Res.">
        <title>The status, quality, and expansion of the NIH full-length cDNA project: the Mammalian Gene Collection (MGC).</title>
        <authorList>
            <consortium name="The MGC Project Team"/>
        </authorList>
    </citation>
    <scope>NUCLEOTIDE SEQUENCE [LARGE SCALE MRNA] OF 1-298</scope>
    <source>
        <tissue>Lymph</tissue>
    </source>
</reference>
<reference key="4">
    <citation type="journal article" date="1999" name="Proc. Natl. Acad. Sci. U.S.A.">
        <title>CoREST: a functional corepressor required for regulation of neural-specific gene expression.</title>
        <authorList>
            <person name="Andres M.E."/>
            <person name="Burger C."/>
            <person name="Peral-Rubio M.J."/>
            <person name="Battaglioli E."/>
            <person name="Anderson M.E."/>
            <person name="Grimes J."/>
            <person name="Dallman J."/>
            <person name="Ballas N."/>
            <person name="Mandel G."/>
        </authorList>
    </citation>
    <scope>NUCLEOTIDE SEQUENCE [MRNA] OF 4-485</scope>
    <scope>INTERACTION WITH REST</scope>
    <scope>TISSUE SPECIFICITY</scope>
    <source>
        <tissue>Cervix carcinoma</tissue>
    </source>
</reference>
<reference key="5">
    <citation type="journal article" date="1994" name="DNA Res.">
        <title>Prediction of the coding sequences of unidentified human genes. II. The coding sequences of 40 new genes (KIAA0041-KIAA0080) deduced by analysis of cDNA clones from human cell line KG-1.</title>
        <authorList>
            <person name="Nomura N."/>
            <person name="Nagase T."/>
            <person name="Miyajima N."/>
            <person name="Sazuka T."/>
            <person name="Tanaka A."/>
            <person name="Sato S."/>
            <person name="Seki N."/>
            <person name="Kawarabayasi Y."/>
            <person name="Ishikawa K."/>
            <person name="Tabata S."/>
        </authorList>
    </citation>
    <scope>NUCLEOTIDE SEQUENCE [LARGE SCALE MRNA] OF 90-485</scope>
    <source>
        <tissue>Bone marrow</tissue>
    </source>
</reference>
<reference key="6">
    <citation type="journal article" date="2000" name="J. Biol. Chem.">
        <title>The co-repressor mSin3A is a functional component of the REST-CoREST repressor complex.</title>
        <authorList>
            <person name="Grimes J.A."/>
            <person name="Nielsen S.J."/>
            <person name="Battaglioli E."/>
            <person name="Miska E.A."/>
            <person name="Speh J.C."/>
            <person name="Berry D.L."/>
            <person name="Atouf F."/>
            <person name="Holdener B.C."/>
            <person name="Mandel G."/>
            <person name="Kouzarides T."/>
        </authorList>
    </citation>
    <scope>SUBCELLULAR LOCATION</scope>
    <scope>INTERACTION WITH REST</scope>
</reference>
<reference key="7">
    <citation type="journal article" date="2001" name="Neuron">
        <title>Regulation of neuronal traits by a novel transcriptional complex.</title>
        <authorList>
            <person name="Ballas N."/>
            <person name="Battaglioli E."/>
            <person name="Atouf F."/>
            <person name="Andres M.E."/>
            <person name="Chenoweth J."/>
            <person name="Anderson M.E."/>
            <person name="Burger C."/>
            <person name="Moniwa M."/>
            <person name="Davie J.R."/>
            <person name="Bowers W.J."/>
            <person name="Federoff H.J."/>
            <person name="Rose D.W."/>
            <person name="Rosenfeld M.G."/>
            <person name="Brehm P."/>
            <person name="Mandel G."/>
        </authorList>
    </citation>
    <scope>FUNCTION</scope>
    <scope>INTERACTION WITH HDAC1 AND HDAC2</scope>
</reference>
<reference key="8">
    <citation type="journal article" date="2001" name="J. Biol. Chem.">
        <title>Stable histone deacetylase complexes distinguished by the presence of SANT domain proteins CoREST/kiaa0071 and Mta-L1.</title>
        <authorList>
            <person name="Humphrey G.W."/>
            <person name="Wang Y."/>
            <person name="Russanova V.R."/>
            <person name="Hirai T."/>
            <person name="Qin J."/>
            <person name="Nakatani Y."/>
            <person name="Howard B.H."/>
        </authorList>
    </citation>
    <scope>IDENTIFICATION BY MASS SPECTROMETRY</scope>
    <scope>IDENTIFICATION IN THE BHC COMPLEX WITH HDAC1 AND KDM1A</scope>
</reference>
<reference key="9">
    <citation type="journal article" date="2001" name="Proc. Natl. Acad. Sci. U.S.A.">
        <title>CoREST is an integral component of the CoREST-human histone deacetylase complex.</title>
        <authorList>
            <person name="You A."/>
            <person name="Tong J.K."/>
            <person name="Grozinger C.M."/>
            <person name="Schreiber S.L."/>
        </authorList>
    </citation>
    <scope>FUNCTION</scope>
    <scope>IDENTIFICATION BY MASS SPECTROMETRY</scope>
    <scope>IDENTIFICATION IN THE BHC COMPLEX WITH HDAC1; HDAC2 AND KDM1A</scope>
</reference>
<reference key="10">
    <citation type="journal article" date="2002" name="J. Biol. Chem.">
        <title>REST repression of neuronal genes requires components of the hSWI.SNF complex.</title>
        <authorList>
            <person name="Battaglioli E."/>
            <person name="Andres M.E."/>
            <person name="Rose D.W."/>
            <person name="Chenoweth J.G."/>
            <person name="Rosenfeld M.G."/>
            <person name="Anderson M.E."/>
            <person name="Mandel G."/>
        </authorList>
    </citation>
    <scope>INTERACTION WITH SMARCE1</scope>
</reference>
<reference key="11">
    <citation type="journal article" date="2002" name="Proc. Natl. Acad. Sci. U.S.A.">
        <title>A core-BRAF35 complex containing histone deacetylase mediates repression of neuronal-specific genes.</title>
        <authorList>
            <person name="Hakimi M.-A."/>
            <person name="Bochar D.A."/>
            <person name="Chenoweth J."/>
            <person name="Lane W.S."/>
            <person name="Mandel G."/>
            <person name="Shiekhattar R."/>
        </authorList>
    </citation>
    <scope>FUNCTION</scope>
    <scope>IDENTIFICATION BY MASS SPECTROMETRY</scope>
    <scope>IDENTIFICATION IN THE BHC COMPLEX WITH HDAC1; HDAC2; HMG20B; KDM1A AND PHF21A</scope>
</reference>
<reference key="12">
    <citation type="journal article" date="2002" name="Science">
        <title>Corepressor-dependent silencing of chromosomal regions encoding neuronal genes.</title>
        <authorList>
            <person name="Lunyak V.V."/>
            <person name="Burgess R."/>
            <person name="Prefontaine G.G."/>
            <person name="Nelson C."/>
            <person name="Sze S.-H."/>
            <person name="Chenoweth J."/>
            <person name="Schwartz P."/>
            <person name="Pevzner P.A."/>
            <person name="Glass C."/>
            <person name="Mandel G."/>
            <person name="Rosenfeld M.G."/>
        </authorList>
    </citation>
    <scope>FUNCTION</scope>
</reference>
<reference key="13">
    <citation type="journal article" date="2003" name="Science">
        <authorList>
            <person name="Lunyak V.V."/>
            <person name="Burgess R."/>
            <person name="Prefontaine G.G."/>
            <person name="Nelson C."/>
            <person name="Sze S.-H."/>
            <person name="Chenoweth J."/>
            <person name="Schwartz P."/>
            <person name="Pevzner P.A."/>
            <person name="Glass C."/>
            <person name="Mandel G."/>
            <person name="Rosenfeld M.G."/>
        </authorList>
    </citation>
    <scope>ERRATUM OF PUBMED:12399542</scope>
</reference>
<reference key="14">
    <citation type="journal article" date="2003" name="J. Biol. Chem.">
        <title>A candidate X-linked mental retardation gene is a component of a new family of histone deacetylase-containing complexes.</title>
        <authorList>
            <person name="Hakimi M.-A."/>
            <person name="Dong Y."/>
            <person name="Lane W.S."/>
            <person name="Speicher D.W."/>
            <person name="Shiekhattar R."/>
        </authorList>
    </citation>
    <scope>FUNCTION</scope>
    <scope>IDENTIFICATION BY MASS SPECTROMETRY</scope>
    <scope>IDENTIFICATION IN THE BHC COMPLEX WITH GSE1; GTF2I; HDAC1; HDAC2; HMG20B; KDM1A; PHF21A; ZMYM2; ZMYM3 AND ZNF217</scope>
</reference>
<reference key="15">
    <citation type="journal article" date="2005" name="Mol. Cell">
        <title>Regulation of LSD1 histone demethylase activity by its associated factors.</title>
        <authorList>
            <person name="Shi Y.-J."/>
            <person name="Matson C."/>
            <person name="Lan F."/>
            <person name="Iwase S."/>
            <person name="Baba T."/>
            <person name="Shi Y."/>
        </authorList>
    </citation>
    <scope>FUNCTION</scope>
    <scope>DOMAIN</scope>
    <scope>INTERACTION WITH KDM1A</scope>
</reference>
<reference key="16">
    <citation type="journal article" date="2005" name="Nature">
        <title>An essential role for CoREST in nucleosomal histone 3 lysine 4 demethylation.</title>
        <authorList>
            <person name="Lee M.G."/>
            <person name="Wynder C."/>
            <person name="Cooch N."/>
            <person name="Shiekhattar R."/>
        </authorList>
    </citation>
    <scope>FUNCTION</scope>
    <scope>INTERACTION WITH KDM1A</scope>
</reference>
<reference key="17">
    <citation type="journal article" date="2005" name="Proc. Natl. Acad. Sci. U.S.A.">
        <title>Components of the REST/CoREST/histone deacetylase repressor complex are disrupted, modified, and translocated in HSV-1-infected cells.</title>
        <authorList>
            <person name="Gu H."/>
            <person name="Liang Y."/>
            <person name="Mandel G."/>
            <person name="Roizman B."/>
        </authorList>
    </citation>
    <scope>SUBCELLULAR LOCATION</scope>
    <scope>PHOSPHORYLATION</scope>
    <scope>INTERACTION WITH HSV-1 ICP0 (MICROBIAL INFECTION)</scope>
</reference>
<reference key="18">
    <citation type="journal article" date="2006" name="Cell">
        <title>Global, in vivo, and site-specific phosphorylation dynamics in signaling networks.</title>
        <authorList>
            <person name="Olsen J.V."/>
            <person name="Blagoev B."/>
            <person name="Gnad F."/>
            <person name="Macek B."/>
            <person name="Kumar C."/>
            <person name="Mortensen P."/>
            <person name="Mann M."/>
        </authorList>
    </citation>
    <scope>PHOSPHORYLATION [LARGE SCALE ANALYSIS] AT SER-260</scope>
    <scope>IDENTIFICATION BY MASS SPECTROMETRY [LARGE SCALE ANALYSIS]</scope>
    <source>
        <tissue>Cervix carcinoma</tissue>
    </source>
</reference>
<reference key="19">
    <citation type="journal article" date="2008" name="Proc. Natl. Acad. Sci. U.S.A.">
        <title>A quantitative atlas of mitotic phosphorylation.</title>
        <authorList>
            <person name="Dephoure N."/>
            <person name="Zhou C."/>
            <person name="Villen J."/>
            <person name="Beausoleil S.A."/>
            <person name="Bakalarski C.E."/>
            <person name="Elledge S.J."/>
            <person name="Gygi S.P."/>
        </authorList>
    </citation>
    <scope>PHOSPHORYLATION [LARGE SCALE ANALYSIS] AT SER-127</scope>
    <scope>IDENTIFICATION BY MASS SPECTROMETRY [LARGE SCALE ANALYSIS]</scope>
    <source>
        <tissue>Cervix carcinoma</tissue>
    </source>
</reference>
<reference key="20">
    <citation type="journal article" date="2009" name="Sci. Signal.">
        <title>Quantitative phosphoproteomic analysis of T cell receptor signaling reveals system-wide modulation of protein-protein interactions.</title>
        <authorList>
            <person name="Mayya V."/>
            <person name="Lundgren D.H."/>
            <person name="Hwang S.-I."/>
            <person name="Rezaul K."/>
            <person name="Wu L."/>
            <person name="Eng J.K."/>
            <person name="Rodionov V."/>
            <person name="Han D.K."/>
        </authorList>
    </citation>
    <scope>PHOSPHORYLATION [LARGE SCALE ANALYSIS] AT SER-127 AND SER-260</scope>
    <scope>IDENTIFICATION BY MASS SPECTROMETRY [LARGE SCALE ANALYSIS]</scope>
    <source>
        <tissue>Leukemic T-cell</tissue>
    </source>
</reference>
<reference key="21">
    <citation type="journal article" date="2010" name="Sci. Signal.">
        <title>Quantitative phosphoproteomics reveals widespread full phosphorylation site occupancy during mitosis.</title>
        <authorList>
            <person name="Olsen J.V."/>
            <person name="Vermeulen M."/>
            <person name="Santamaria A."/>
            <person name="Kumar C."/>
            <person name="Miller M.L."/>
            <person name="Jensen L.J."/>
            <person name="Gnad F."/>
            <person name="Cox J."/>
            <person name="Jensen T.S."/>
            <person name="Nigg E.A."/>
            <person name="Brunak S."/>
            <person name="Mann M."/>
        </authorList>
    </citation>
    <scope>PHOSPHORYLATION [LARGE SCALE ANALYSIS] AT SER-127 AND SER-260</scope>
    <scope>IDENTIFICATION BY MASS SPECTROMETRY [LARGE SCALE ANALYSIS]</scope>
    <source>
        <tissue>Cervix carcinoma</tissue>
    </source>
</reference>
<reference key="22">
    <citation type="journal article" date="2011" name="BMC Syst. Biol.">
        <title>Initial characterization of the human central proteome.</title>
        <authorList>
            <person name="Burkard T.R."/>
            <person name="Planyavsky M."/>
            <person name="Kaupe I."/>
            <person name="Breitwieser F.P."/>
            <person name="Buerckstuemmer T."/>
            <person name="Bennett K.L."/>
            <person name="Superti-Furga G."/>
            <person name="Colinge J."/>
        </authorList>
    </citation>
    <scope>IDENTIFICATION BY MASS SPECTROMETRY [LARGE SCALE ANALYSIS]</scope>
</reference>
<reference key="23">
    <citation type="journal article" date="2011" name="Sci. Signal.">
        <title>System-wide temporal characterization of the proteome and phosphoproteome of human embryonic stem cell differentiation.</title>
        <authorList>
            <person name="Rigbolt K.T."/>
            <person name="Prokhorova T.A."/>
            <person name="Akimov V."/>
            <person name="Henningsen J."/>
            <person name="Johansen P.T."/>
            <person name="Kratchmarova I."/>
            <person name="Kassem M."/>
            <person name="Mann M."/>
            <person name="Olsen J.V."/>
            <person name="Blagoev B."/>
        </authorList>
    </citation>
    <scope>PHOSPHORYLATION [LARGE SCALE ANALYSIS] AT SER-260 AND SER-460</scope>
    <scope>IDENTIFICATION BY MASS SPECTROMETRY [LARGE SCALE ANALYSIS]</scope>
</reference>
<reference key="24">
    <citation type="journal article" date="2012" name="Proc. Natl. Acad. Sci. U.S.A.">
        <title>N-terminal acetylome analyses and functional insights of the N-terminal acetyltransferase NatB.</title>
        <authorList>
            <person name="Van Damme P."/>
            <person name="Lasa M."/>
            <person name="Polevoda B."/>
            <person name="Gazquez C."/>
            <person name="Elosegui-Artola A."/>
            <person name="Kim D.S."/>
            <person name="De Juan-Pardo E."/>
            <person name="Demeyer K."/>
            <person name="Hole K."/>
            <person name="Larrea E."/>
            <person name="Timmerman E."/>
            <person name="Prieto J."/>
            <person name="Arnesen T."/>
            <person name="Sherman F."/>
            <person name="Gevaert K."/>
            <person name="Aldabe R."/>
        </authorList>
    </citation>
    <scope>IDENTIFICATION BY MASS SPECTROMETRY [LARGE SCALE ANALYSIS]</scope>
</reference>
<reference key="25">
    <citation type="journal article" date="2013" name="J. Proteome Res.">
        <title>Toward a comprehensive characterization of a human cancer cell phosphoproteome.</title>
        <authorList>
            <person name="Zhou H."/>
            <person name="Di Palma S."/>
            <person name="Preisinger C."/>
            <person name="Peng M."/>
            <person name="Polat A.N."/>
            <person name="Heck A.J."/>
            <person name="Mohammed S."/>
        </authorList>
    </citation>
    <scope>PHOSPHORYLATION [LARGE SCALE ANALYSIS] AT SER-127; SER-260 AND SER-460</scope>
    <scope>IDENTIFICATION BY MASS SPECTROMETRY [LARGE SCALE ANALYSIS]</scope>
    <source>
        <tissue>Cervix carcinoma</tissue>
        <tissue>Erythroleukemia</tissue>
    </source>
</reference>
<reference key="26">
    <citation type="journal article" date="2017" name="Nat. Struct. Mol. Biol.">
        <title>Site-specific mapping of the human SUMO proteome reveals co-modification with phosphorylation.</title>
        <authorList>
            <person name="Hendriks I.A."/>
            <person name="Lyon D."/>
            <person name="Young C."/>
            <person name="Jensen L.J."/>
            <person name="Vertegaal A.C."/>
            <person name="Nielsen M.L."/>
        </authorList>
    </citation>
    <scope>SUMOYLATION [LARGE SCALE ANALYSIS] AT LYS-122; LYS-297 AND LYS-466</scope>
    <scope>IDENTIFICATION BY MASS SPECTROMETRY [LARGE SCALE ANALYSIS]</scope>
</reference>
<reference key="27">
    <citation type="journal article" date="2023" name="J. Biol. Chem.">
        <title>The stem cell-supporting small molecule UM171 triggers Cul3-KBTBD4-mediated degradation of ELM2 domain-harboring proteins.</title>
        <authorList>
            <person name="Zemaitis K."/>
            <person name="Ghosh S."/>
            <person name="Hansson J."/>
            <person name="Subramaniam A."/>
        </authorList>
    </citation>
    <scope>MUTAGENESIS OF ARG-106; GLN-110; TYR-111; GLN-112; VAL-114 AND ASP-117</scope>
</reference>
<reference key="28">
    <citation type="journal article" date="2006" name="Mol. Cell">
        <title>Structural basis for CoREST-dependent demethylation of nucleosomes by the human LSD1 histone demethylase.</title>
        <authorList>
            <person name="Yang M."/>
            <person name="Gocke C.B."/>
            <person name="Luo X."/>
            <person name="Borek D."/>
            <person name="Tomchick D.R."/>
            <person name="Machius M."/>
            <person name="Otwinowski Z."/>
            <person name="Yu H."/>
        </authorList>
    </citation>
    <scope>X-RAY CRYSTALLOGRAPHY (2.57 ANGSTROMS) OF 289-485 IN COMPLEX WITH KDM1A</scope>
</reference>
<comment type="function">
    <text evidence="10 11 12 14 15 17 18">Essential component of the BHC complex, a corepressor complex that represses transcription of neuron-specific genes in non-neuronal cells. The BHC complex is recruited at RE1/NRSE sites by REST and acts by deacetylating and demethylating specific sites on histones, thereby acting as a chromatin modifier. In the BHC complex, it serves as a molecular beacon for the recruitment of molecular machinery, including MeCP2 and SUV39H1, that imposes silencing across a chromosomal interval. Plays a central role in demethylation of Lys-4 of histone H3 by promoting demethylase activity of KDM1A on core histones and nucleosomal substrates. It also protects KDM1A from the proteasome. Component of a RCOR/GFI/KDM1A/HDAC complex that suppresses, via histone deacetylase (HDAC) recruitment, a number of genes implicated in multilineage blood cell development and controls hematopoietic differentiation.</text>
</comment>
<comment type="subunit">
    <text evidence="1 2 7 8 9 10 11 12 13 15 17 18 19">Interacts directly with GFI1 and GFI1B in a RCOR/GFI/KDM1A/HDAC complex. Interacts with INMS1 (By similarity). Component of a BHC histone deacetylase complex that contains HDAC1, HDAC2, HMG20B/BRAF35, KDM1A, RCOR1/CoREST and PHF21A/BHC80. The BHC complex may also contain ZMYM2, ZNF217, ZMYM3, GSE1 and GTF2I. Interacts with REST. Interacts with the SMARCE1/BAF57, suggesting that the BHC complex may recruit the ATP-dependent chromatin-remodeling SWI-SNF complex. Interacts with SOX2 (By similarity).</text>
</comment>
<comment type="subunit">
    <text evidence="16">(Microbial infection) Interacts with herpes virus HSV-1 ICP0 protein; the interaction leads to the disruption of the BHC complex, thereby preventing the BHC complex from repressing transcription of viral genes.</text>
</comment>
<comment type="interaction">
    <interactant intactId="EBI-926563">
        <id>Q9UKL0</id>
    </interactant>
    <interactant intactId="EBI-301834">
        <id>Q13547</id>
        <label>HDAC1</label>
    </interactant>
    <organismsDiffer>false</organismsDiffer>
    <experiments>15</experiments>
</comment>
<comment type="interaction">
    <interactant intactId="EBI-926563">
        <id>Q9UKL0</id>
    </interactant>
    <interactant intactId="EBI-710124">
        <id>O60341</id>
        <label>KDM1A</label>
    </interactant>
    <organismsDiffer>false</organismsDiffer>
    <experiments>8</experiments>
</comment>
<comment type="interaction">
    <interactant intactId="EBI-926563">
        <id>Q9UKL0</id>
    </interactant>
    <interactant intactId="EBI-15599570">
        <id>O60341-1</id>
        <label>KDM1A</label>
    </interactant>
    <organismsDiffer>false</organismsDiffer>
    <experiments>6</experiments>
</comment>
<comment type="interaction">
    <interactant intactId="EBI-926563">
        <id>Q9UKL0</id>
    </interactant>
    <interactant intactId="EBI-455091">
        <id>Q969G3-1</id>
        <label>SMARCE1</label>
    </interactant>
    <organismsDiffer>false</organismsDiffer>
    <experiments>2</experiments>
</comment>
<comment type="interaction">
    <interactant intactId="EBI-926563">
        <id>Q9UKL0</id>
    </interactant>
    <interactant intactId="EBI-455096">
        <id>Q969G3-2</id>
        <label>SMARCE1</label>
    </interactant>
    <organismsDiffer>false</organismsDiffer>
    <experiments>4</experiments>
</comment>
<comment type="interaction">
    <interactant intactId="EBI-926563">
        <id>Q9UKL0</id>
    </interactant>
    <interactant intactId="EBI-2799490">
        <id>Q92618</id>
        <label>ZNF516</label>
    </interactant>
    <organismsDiffer>false</organismsDiffer>
    <experiments>7</experiments>
</comment>
<comment type="interaction">
    <interactant intactId="EBI-926563">
        <id>Q9UKL0</id>
    </interactant>
    <interactant intactId="EBI-6148881">
        <id>P08393</id>
        <label>ICP0</label>
    </interactant>
    <organismsDiffer>true</organismsDiffer>
    <experiments>2</experiments>
</comment>
<comment type="subcellular location">
    <subcellularLocation>
        <location evidence="4 5 8 16">Nucleus</location>
    </subcellularLocation>
    <text>Upon infection by HSV-1, it is partially translocated into the cytoplasm in an HSV-1-dependent manner.</text>
</comment>
<comment type="tissue specificity">
    <text evidence="7">Ubiquitously expressed.</text>
</comment>
<comment type="domain">
    <text evidence="18">The SANT domains may bridge the nucleosomal substrates and the demethylase KDM1A.</text>
</comment>
<comment type="PTM">
    <text evidence="16">Phosphorylated by HSV-1 protein kinases in case of infection.</text>
</comment>
<comment type="similarity">
    <text evidence="21">Belongs to the CoREST family.</text>
</comment>
<comment type="sequence caution" evidence="21">
    <conflict type="erroneous initiation">
        <sequence resource="EMBL-CDS" id="AAH51003"/>
    </conflict>
    <text>Truncated N-terminus.</text>
</comment>
<comment type="sequence caution" evidence="21">
    <conflict type="erroneous initiation">
        <sequence resource="EMBL-CDS" id="AAH64495"/>
    </conflict>
    <text>Truncated N-terminus.</text>
</comment>
<comment type="sequence caution" evidence="21">
    <conflict type="miscellaneous discrepancy">
        <sequence resource="EMBL-CDS" id="AAH64495"/>
    </conflict>
    <text>Contaminating sequence. Potential poly-A sequence.</text>
</comment>
<sequence length="485" mass="53327">MPAMVEKGPEVSGKRRGRNNAAASASAAAASAAASAACASPAATAASGAAASSASAAAASAAAAPNNGQNKSLAAAAPNGNSSSNSWEEGSSGSSSDEEHGGGGMRVGPQYQAVVPDFDPAKLARRSQERDNLGMLVWSPNQNLSEAKLDEYIAIAKEKHGYNMEQALGMLFWHKHNIEKSLADLPNFTPFPDEWTVEDKVLFEQAFSFHGKTFHRIQQMLPDKSIASLVKFYYSWKKTRTKTSVMDRHARKQKREREESEDELEEANGNNPIDIEVDQNKESKKEVPPTETVPQVKKEKHSTQAKNRAKRKPPKGMFLSQEDVEAVSANATAATTVLRQLDMELVSVKRQIQNIKQTNSALKEKLDGGIEPYRLPEVIQKCNARWTTEEQLLAVQAIRKYGRDFQAISDVIGNKSVVQVKNFFVNYRRRFNIDEVLQEWEAEHGKEETNGPSNQKPVKSPDNSIKMPEEEDEAPVLDVRYASAS</sequence>
<accession>Q9UKL0</accession>
<accession>J3KN32</accession>
<accession>Q15044</accession>
<accession>Q6P2I9</accession>
<accession>Q86VG5</accession>
<feature type="chain" id="PRO_0000226773" description="REST corepressor 1">
    <location>
        <begin position="1"/>
        <end position="485"/>
    </location>
</feature>
<feature type="domain" description="ELM2" evidence="4">
    <location>
        <begin position="103"/>
        <end position="189"/>
    </location>
</feature>
<feature type="domain" description="SANT 1" evidence="5">
    <location>
        <begin position="190"/>
        <end position="241"/>
    </location>
</feature>
<feature type="domain" description="SANT 2" evidence="5">
    <location>
        <begin position="381"/>
        <end position="432"/>
    </location>
</feature>
<feature type="region of interest" description="Disordered" evidence="6">
    <location>
        <begin position="1"/>
        <end position="26"/>
    </location>
</feature>
<feature type="region of interest" description="Disordered" evidence="6">
    <location>
        <begin position="49"/>
        <end position="110"/>
    </location>
</feature>
<feature type="region of interest" description="Interaction with HDAC1" evidence="11">
    <location>
        <begin position="78"/>
        <end position="257"/>
    </location>
</feature>
<feature type="region of interest" description="Disordered" evidence="6">
    <location>
        <begin position="244"/>
        <end position="314"/>
    </location>
</feature>
<feature type="region of interest" description="Interaction with KDM1A" evidence="19">
    <location>
        <begin position="296"/>
        <end position="384"/>
    </location>
</feature>
<feature type="region of interest" description="Disordered" evidence="6">
    <location>
        <begin position="442"/>
        <end position="485"/>
    </location>
</feature>
<feature type="coiled-coil region" evidence="3">
    <location>
        <begin position="244"/>
        <end position="273"/>
    </location>
</feature>
<feature type="coiled-coil region" evidence="3">
    <location>
        <begin position="334"/>
        <end position="369"/>
    </location>
</feature>
<feature type="compositionally biased region" description="Low complexity" evidence="6">
    <location>
        <begin position="49"/>
        <end position="64"/>
    </location>
</feature>
<feature type="compositionally biased region" description="Low complexity" evidence="6">
    <location>
        <begin position="74"/>
        <end position="95"/>
    </location>
</feature>
<feature type="compositionally biased region" description="Basic and acidic residues" evidence="6">
    <location>
        <begin position="278"/>
        <end position="288"/>
    </location>
</feature>
<feature type="compositionally biased region" description="Polar residues" evidence="6">
    <location>
        <begin position="450"/>
        <end position="463"/>
    </location>
</feature>
<feature type="modified residue" description="Phosphoserine" evidence="23 24 25 27">
    <location>
        <position position="127"/>
    </location>
</feature>
<feature type="modified residue" description="Phosphoserine" evidence="22 24 25 26 27">
    <location>
        <position position="260"/>
    </location>
</feature>
<feature type="modified residue" description="Phosphoserine" evidence="26 27">
    <location>
        <position position="460"/>
    </location>
</feature>
<feature type="cross-link" description="Glycyl lysine isopeptide (Lys-Gly) (interchain with G-Cter in SUMO2)" evidence="28">
    <location>
        <position position="122"/>
    </location>
</feature>
<feature type="cross-link" description="Glycyl lysine isopeptide (Lys-Gly) (interchain with G-Cter in SUMO2)" evidence="28">
    <location>
        <position position="297"/>
    </location>
</feature>
<feature type="cross-link" description="Glycyl lysine isopeptide (Lys-Gly) (interchain with G-Cter in SUMO2)" evidence="28">
    <location>
        <position position="466"/>
    </location>
</feature>
<feature type="mutagenesis site" description="Reduces BCR(KBTBD4)-mediated proteasomal degradation." evidence="20">
    <original>R</original>
    <variation>A</variation>
    <location>
        <position position="106"/>
    </location>
</feature>
<feature type="mutagenesis site" description="Reduces BCR(KBTBD4)-mediated proteasomal degradation." evidence="20">
    <original>Q</original>
    <variation>A</variation>
    <location>
        <position position="110"/>
    </location>
</feature>
<feature type="mutagenesis site" description="Reduces BCR(KBTBD4)-mediated proteasomal degradation." evidence="20">
    <original>Y</original>
    <variation>A</variation>
    <location>
        <position position="111"/>
    </location>
</feature>
<feature type="mutagenesis site" description="Reduces BCR(KBTBD4)-mediated proteasomal degradation." evidence="20">
    <original>Q</original>
    <variation>A</variation>
    <location>
        <position position="112"/>
    </location>
</feature>
<feature type="mutagenesis site" description="Reduces BCR(KBTBD4)-mediated proteasomal degradation." evidence="20">
    <original>V</original>
    <variation>A</variation>
    <location>
        <position position="114"/>
    </location>
</feature>
<feature type="mutagenesis site" description="Reduces BCR(KBTBD4)-mediated proteasomal degradation." evidence="20">
    <original>D</original>
    <variation>A</variation>
    <location>
        <position position="117"/>
    </location>
</feature>
<feature type="turn" evidence="35">
    <location>
        <begin position="109"/>
        <end position="111"/>
    </location>
</feature>
<feature type="turn" evidence="35">
    <location>
        <begin position="120"/>
        <end position="125"/>
    </location>
</feature>
<feature type="strand" evidence="35">
    <location>
        <begin position="134"/>
        <end position="138"/>
    </location>
</feature>
<feature type="strand" evidence="35">
    <location>
        <begin position="142"/>
        <end position="144"/>
    </location>
</feature>
<feature type="helix" evidence="35">
    <location>
        <begin position="146"/>
        <end position="160"/>
    </location>
</feature>
<feature type="helix" evidence="35">
    <location>
        <begin position="164"/>
        <end position="173"/>
    </location>
</feature>
<feature type="turn" evidence="35">
    <location>
        <begin position="174"/>
        <end position="176"/>
    </location>
</feature>
<feature type="helix" evidence="35">
    <location>
        <begin position="179"/>
        <end position="182"/>
    </location>
</feature>
<feature type="helix" evidence="35">
    <location>
        <begin position="185"/>
        <end position="187"/>
    </location>
</feature>
<feature type="helix" evidence="35">
    <location>
        <begin position="197"/>
        <end position="210"/>
    </location>
</feature>
<feature type="helix" evidence="35">
    <location>
        <begin position="214"/>
        <end position="220"/>
    </location>
</feature>
<feature type="helix" evidence="35">
    <location>
        <begin position="226"/>
        <end position="231"/>
    </location>
</feature>
<feature type="turn" evidence="34">
    <location>
        <begin position="235"/>
        <end position="238"/>
    </location>
</feature>
<feature type="strand" evidence="31">
    <location>
        <begin position="314"/>
        <end position="316"/>
    </location>
</feature>
<feature type="helix" evidence="29">
    <location>
        <begin position="321"/>
        <end position="328"/>
    </location>
</feature>
<feature type="strand" evidence="30">
    <location>
        <begin position="329"/>
        <end position="332"/>
    </location>
</feature>
<feature type="helix" evidence="29">
    <location>
        <begin position="333"/>
        <end position="365"/>
    </location>
</feature>
<feature type="turn" evidence="29">
    <location>
        <begin position="366"/>
        <end position="372"/>
    </location>
</feature>
<feature type="helix" evidence="29">
    <location>
        <begin position="388"/>
        <end position="400"/>
    </location>
</feature>
<feature type="strand" evidence="32">
    <location>
        <begin position="401"/>
        <end position="403"/>
    </location>
</feature>
<feature type="helix" evidence="29">
    <location>
        <begin position="405"/>
        <end position="412"/>
    </location>
</feature>
<feature type="strand" evidence="33">
    <location>
        <begin position="413"/>
        <end position="415"/>
    </location>
</feature>
<feature type="helix" evidence="29">
    <location>
        <begin position="417"/>
        <end position="426"/>
    </location>
</feature>
<feature type="turn" evidence="29">
    <location>
        <begin position="427"/>
        <end position="432"/>
    </location>
</feature>
<feature type="helix" evidence="29">
    <location>
        <begin position="433"/>
        <end position="441"/>
    </location>
</feature>
<dbReference type="EMBL" id="AL132801">
    <property type="status" value="NOT_ANNOTATED_CDS"/>
    <property type="molecule type" value="Genomic_DNA"/>
</dbReference>
<dbReference type="EMBL" id="AL136293">
    <property type="status" value="NOT_ANNOTATED_CDS"/>
    <property type="molecule type" value="Genomic_DNA"/>
</dbReference>
<dbReference type="EMBL" id="CH471061">
    <property type="protein sequence ID" value="EAW81793.1"/>
    <property type="molecule type" value="Genomic_DNA"/>
</dbReference>
<dbReference type="EMBL" id="BC051003">
    <property type="protein sequence ID" value="AAH51003.1"/>
    <property type="status" value="ALT_INIT"/>
    <property type="molecule type" value="mRNA"/>
</dbReference>
<dbReference type="EMBL" id="BC064495">
    <property type="protein sequence ID" value="AAH64495.1"/>
    <property type="status" value="ALT_SEQ"/>
    <property type="molecule type" value="mRNA"/>
</dbReference>
<dbReference type="EMBL" id="AF155595">
    <property type="protein sequence ID" value="AAF01498.1"/>
    <property type="molecule type" value="mRNA"/>
</dbReference>
<dbReference type="EMBL" id="D31888">
    <property type="protein sequence ID" value="BAA06686.1"/>
    <property type="molecule type" value="mRNA"/>
</dbReference>
<dbReference type="CCDS" id="CCDS9974.2"/>
<dbReference type="RefSeq" id="NP_055971.2">
    <property type="nucleotide sequence ID" value="NM_015156.4"/>
</dbReference>
<dbReference type="PDB" id="2IW5">
    <property type="method" value="X-ray"/>
    <property type="resolution" value="2.57 A"/>
    <property type="chains" value="B=289-485"/>
</dbReference>
<dbReference type="PDB" id="2UXN">
    <property type="method" value="X-ray"/>
    <property type="resolution" value="2.72 A"/>
    <property type="chains" value="B=289-485"/>
</dbReference>
<dbReference type="PDB" id="2UXX">
    <property type="method" value="X-ray"/>
    <property type="resolution" value="2.74 A"/>
    <property type="chains" value="B=289-485"/>
</dbReference>
<dbReference type="PDB" id="2V1D">
    <property type="method" value="X-ray"/>
    <property type="resolution" value="3.10 A"/>
    <property type="chains" value="B=308-485"/>
</dbReference>
<dbReference type="PDB" id="2X0L">
    <property type="method" value="X-ray"/>
    <property type="resolution" value="3.00 A"/>
    <property type="chains" value="B=311-443"/>
</dbReference>
<dbReference type="PDB" id="2XAF">
    <property type="method" value="X-ray"/>
    <property type="resolution" value="3.25 A"/>
    <property type="chains" value="B=4-485"/>
</dbReference>
<dbReference type="PDB" id="2XAG">
    <property type="method" value="X-ray"/>
    <property type="resolution" value="3.10 A"/>
    <property type="chains" value="B=4-485"/>
</dbReference>
<dbReference type="PDB" id="2XAH">
    <property type="method" value="X-ray"/>
    <property type="resolution" value="3.10 A"/>
    <property type="chains" value="B=4-485"/>
</dbReference>
<dbReference type="PDB" id="2XAJ">
    <property type="method" value="X-ray"/>
    <property type="resolution" value="3.30 A"/>
    <property type="chains" value="B=4-485"/>
</dbReference>
<dbReference type="PDB" id="2XAQ">
    <property type="method" value="X-ray"/>
    <property type="resolution" value="3.20 A"/>
    <property type="chains" value="B=4-485"/>
</dbReference>
<dbReference type="PDB" id="2XAS">
    <property type="method" value="X-ray"/>
    <property type="resolution" value="3.20 A"/>
    <property type="chains" value="B=4-485"/>
</dbReference>
<dbReference type="PDB" id="2Y48">
    <property type="method" value="X-ray"/>
    <property type="resolution" value="3.00 A"/>
    <property type="chains" value="B=308-485"/>
</dbReference>
<dbReference type="PDB" id="3ZMS">
    <property type="method" value="X-ray"/>
    <property type="resolution" value="2.96 A"/>
    <property type="chains" value="B=4-485"/>
</dbReference>
<dbReference type="PDB" id="3ZMT">
    <property type="method" value="X-ray"/>
    <property type="resolution" value="3.10 A"/>
    <property type="chains" value="B=4-485"/>
</dbReference>
<dbReference type="PDB" id="3ZMU">
    <property type="method" value="X-ray"/>
    <property type="resolution" value="3.20 A"/>
    <property type="chains" value="B=4-485"/>
</dbReference>
<dbReference type="PDB" id="3ZMV">
    <property type="method" value="X-ray"/>
    <property type="resolution" value="3.00 A"/>
    <property type="chains" value="B=4-485"/>
</dbReference>
<dbReference type="PDB" id="3ZMZ">
    <property type="method" value="X-ray"/>
    <property type="resolution" value="3.00 A"/>
    <property type="chains" value="B=4-485"/>
</dbReference>
<dbReference type="PDB" id="3ZN0">
    <property type="method" value="X-ray"/>
    <property type="resolution" value="2.80 A"/>
    <property type="chains" value="B=4-485"/>
</dbReference>
<dbReference type="PDB" id="3ZN1">
    <property type="method" value="X-ray"/>
    <property type="resolution" value="3.10 A"/>
    <property type="chains" value="B=4-485"/>
</dbReference>
<dbReference type="PDB" id="4BAY">
    <property type="method" value="X-ray"/>
    <property type="resolution" value="3.10 A"/>
    <property type="chains" value="B=311-443"/>
</dbReference>
<dbReference type="PDB" id="4KUM">
    <property type="method" value="X-ray"/>
    <property type="resolution" value="3.05 A"/>
    <property type="chains" value="B=289-485"/>
</dbReference>
<dbReference type="PDB" id="4UV8">
    <property type="method" value="X-ray"/>
    <property type="resolution" value="2.80 A"/>
    <property type="chains" value="B=4-485"/>
</dbReference>
<dbReference type="PDB" id="4UV9">
    <property type="method" value="X-ray"/>
    <property type="resolution" value="3.00 A"/>
    <property type="chains" value="B=4-485"/>
</dbReference>
<dbReference type="PDB" id="4UVA">
    <property type="method" value="X-ray"/>
    <property type="resolution" value="2.90 A"/>
    <property type="chains" value="B=4-485"/>
</dbReference>
<dbReference type="PDB" id="4UVB">
    <property type="method" value="X-ray"/>
    <property type="resolution" value="2.80 A"/>
    <property type="chains" value="B=4-485"/>
</dbReference>
<dbReference type="PDB" id="4UVC">
    <property type="method" value="X-ray"/>
    <property type="resolution" value="3.10 A"/>
    <property type="chains" value="B=4-485"/>
</dbReference>
<dbReference type="PDB" id="4UXN">
    <property type="method" value="X-ray"/>
    <property type="resolution" value="2.85 A"/>
    <property type="chains" value="B=4-485"/>
</dbReference>
<dbReference type="PDB" id="4XBF">
    <property type="method" value="X-ray"/>
    <property type="resolution" value="2.80 A"/>
    <property type="chains" value="B=311-443"/>
</dbReference>
<dbReference type="PDB" id="5H6Q">
    <property type="method" value="X-ray"/>
    <property type="resolution" value="2.53 A"/>
    <property type="chains" value="B=311-443"/>
</dbReference>
<dbReference type="PDB" id="5H6R">
    <property type="method" value="X-ray"/>
    <property type="resolution" value="2.60 A"/>
    <property type="chains" value="B=311-443"/>
</dbReference>
<dbReference type="PDB" id="5L3B">
    <property type="method" value="X-ray"/>
    <property type="resolution" value="3.30 A"/>
    <property type="chains" value="B=4-485"/>
</dbReference>
<dbReference type="PDB" id="5L3C">
    <property type="method" value="X-ray"/>
    <property type="resolution" value="3.31 A"/>
    <property type="chains" value="B=4-485"/>
</dbReference>
<dbReference type="PDB" id="5L3D">
    <property type="method" value="X-ray"/>
    <property type="resolution" value="2.60 A"/>
    <property type="chains" value="B=4-485"/>
</dbReference>
<dbReference type="PDB" id="5L3E">
    <property type="method" value="X-ray"/>
    <property type="resolution" value="2.80 A"/>
    <property type="chains" value="B=308-485"/>
</dbReference>
<dbReference type="PDB" id="5L3F">
    <property type="method" value="X-ray"/>
    <property type="resolution" value="3.50 A"/>
    <property type="chains" value="B=308-485"/>
</dbReference>
<dbReference type="PDB" id="5L3G">
    <property type="method" value="X-ray"/>
    <property type="resolution" value="3.10 A"/>
    <property type="chains" value="B=308-485"/>
</dbReference>
<dbReference type="PDB" id="5LBQ">
    <property type="method" value="X-ray"/>
    <property type="resolution" value="3.30 A"/>
    <property type="chains" value="B=308-485"/>
</dbReference>
<dbReference type="PDB" id="5LGN">
    <property type="method" value="X-ray"/>
    <property type="resolution" value="3.20 A"/>
    <property type="chains" value="B=311-443"/>
</dbReference>
<dbReference type="PDB" id="5LGT">
    <property type="method" value="X-ray"/>
    <property type="resolution" value="3.00 A"/>
    <property type="chains" value="B=308-485"/>
</dbReference>
<dbReference type="PDB" id="5LGU">
    <property type="method" value="X-ray"/>
    <property type="resolution" value="3.20 A"/>
    <property type="chains" value="B=308-485"/>
</dbReference>
<dbReference type="PDB" id="5LHG">
    <property type="method" value="X-ray"/>
    <property type="resolution" value="3.34 A"/>
    <property type="chains" value="B=4-485"/>
</dbReference>
<dbReference type="PDB" id="5LHH">
    <property type="method" value="X-ray"/>
    <property type="resolution" value="3.05 A"/>
    <property type="chains" value="B=4-485"/>
</dbReference>
<dbReference type="PDB" id="5LHI">
    <property type="method" value="X-ray"/>
    <property type="resolution" value="3.40 A"/>
    <property type="chains" value="B=4-485"/>
</dbReference>
<dbReference type="PDB" id="5X60">
    <property type="method" value="X-ray"/>
    <property type="resolution" value="2.69 A"/>
    <property type="chains" value="B=311-443"/>
</dbReference>
<dbReference type="PDB" id="5YJB">
    <property type="method" value="X-ray"/>
    <property type="resolution" value="2.96 A"/>
    <property type="chains" value="B=311-443"/>
</dbReference>
<dbReference type="PDB" id="6K3E">
    <property type="method" value="X-ray"/>
    <property type="resolution" value="2.87 A"/>
    <property type="chains" value="B=311-443"/>
</dbReference>
<dbReference type="PDB" id="6KGK">
    <property type="method" value="X-ray"/>
    <property type="resolution" value="2.70 A"/>
    <property type="chains" value="B=311-443"/>
</dbReference>
<dbReference type="PDB" id="6KGL">
    <property type="method" value="X-ray"/>
    <property type="resolution" value="2.70 A"/>
    <property type="chains" value="B=311-443"/>
</dbReference>
<dbReference type="PDB" id="6KGM">
    <property type="method" value="X-ray"/>
    <property type="resolution" value="2.62 A"/>
    <property type="chains" value="B=311-443"/>
</dbReference>
<dbReference type="PDB" id="6KGN">
    <property type="method" value="X-ray"/>
    <property type="resolution" value="2.62 A"/>
    <property type="chains" value="B=311-443"/>
</dbReference>
<dbReference type="PDB" id="6S35">
    <property type="method" value="X-ray"/>
    <property type="resolution" value="3.10 A"/>
    <property type="chains" value="B=308-485"/>
</dbReference>
<dbReference type="PDB" id="6TE1">
    <property type="method" value="X-ray"/>
    <property type="resolution" value="3.11 A"/>
    <property type="chains" value="B=4-485"/>
</dbReference>
<dbReference type="PDB" id="6TUY">
    <property type="method" value="X-ray"/>
    <property type="resolution" value="2.60 A"/>
    <property type="chains" value="B=1-485"/>
</dbReference>
<dbReference type="PDB" id="6VYP">
    <property type="method" value="X-ray"/>
    <property type="resolution" value="4.99 A"/>
    <property type="chains" value="L/N/l/n=289-443"/>
</dbReference>
<dbReference type="PDB" id="6W4K">
    <property type="method" value="X-ray"/>
    <property type="resolution" value="2.93 A"/>
    <property type="chains" value="B=312-443"/>
</dbReference>
<dbReference type="PDB" id="6WC6">
    <property type="method" value="X-ray"/>
    <property type="resolution" value="3.10 A"/>
    <property type="chains" value="B=311-443"/>
</dbReference>
<dbReference type="PDB" id="7CDC">
    <property type="method" value="X-ray"/>
    <property type="resolution" value="2.64 A"/>
    <property type="chains" value="B=311-443"/>
</dbReference>
<dbReference type="PDB" id="7CDD">
    <property type="method" value="X-ray"/>
    <property type="resolution" value="2.76 A"/>
    <property type="chains" value="B=311-443"/>
</dbReference>
<dbReference type="PDB" id="7CDE">
    <property type="method" value="X-ray"/>
    <property type="resolution" value="2.68 A"/>
    <property type="chains" value="B=311-443"/>
</dbReference>
<dbReference type="PDB" id="7CDF">
    <property type="method" value="X-ray"/>
    <property type="resolution" value="2.68 A"/>
    <property type="chains" value="B=311-443"/>
</dbReference>
<dbReference type="PDB" id="7CDG">
    <property type="method" value="X-ray"/>
    <property type="resolution" value="2.80 A"/>
    <property type="chains" value="B=311-443"/>
</dbReference>
<dbReference type="PDB" id="7ZRY">
    <property type="method" value="X-ray"/>
    <property type="resolution" value="2.70 A"/>
    <property type="chains" value="B=308-485"/>
</dbReference>
<dbReference type="PDB" id="8BOP">
    <property type="method" value="X-ray"/>
    <property type="resolution" value="2.74 A"/>
    <property type="chains" value="B=308-443"/>
</dbReference>
<dbReference type="PDB" id="8BOX">
    <property type="method" value="X-ray"/>
    <property type="resolution" value="2.82 A"/>
    <property type="chains" value="B=308-443"/>
</dbReference>
<dbReference type="PDB" id="8F2Z">
    <property type="method" value="X-ray"/>
    <property type="resolution" value="3.00 A"/>
    <property type="chains" value="B=308-443"/>
</dbReference>
<dbReference type="PDB" id="8F30">
    <property type="method" value="X-ray"/>
    <property type="resolution" value="3.10 A"/>
    <property type="chains" value="B=308-443"/>
</dbReference>
<dbReference type="PDB" id="8F59">
    <property type="method" value="X-ray"/>
    <property type="resolution" value="2.80 A"/>
    <property type="chains" value="B=308-443"/>
</dbReference>
<dbReference type="PDB" id="8F6S">
    <property type="method" value="X-ray"/>
    <property type="resolution" value="2.91 A"/>
    <property type="chains" value="B=308-443"/>
</dbReference>
<dbReference type="PDB" id="8FDV">
    <property type="method" value="X-ray"/>
    <property type="resolution" value="2.95 A"/>
    <property type="chains" value="B=308-443"/>
</dbReference>
<dbReference type="PDB" id="8FJ4">
    <property type="method" value="X-ray"/>
    <property type="resolution" value="2.76 A"/>
    <property type="chains" value="B=308-443"/>
</dbReference>
<dbReference type="PDB" id="8FJ7">
    <property type="method" value="X-ray"/>
    <property type="resolution" value="2.80 A"/>
    <property type="chains" value="B=308-443"/>
</dbReference>
<dbReference type="PDB" id="8FQJ">
    <property type="method" value="X-ray"/>
    <property type="resolution" value="2.90 A"/>
    <property type="chains" value="B=308-443"/>
</dbReference>
<dbReference type="PDB" id="8FRI">
    <property type="method" value="X-ray"/>
    <property type="resolution" value="2.80 A"/>
    <property type="chains" value="B=308-443"/>
</dbReference>
<dbReference type="PDB" id="8FRQ">
    <property type="method" value="X-ray"/>
    <property type="resolution" value="2.89 A"/>
    <property type="chains" value="B=308-443"/>
</dbReference>
<dbReference type="PDB" id="8FRV">
    <property type="method" value="X-ray"/>
    <property type="resolution" value="2.72 A"/>
    <property type="chains" value="B=308-443"/>
</dbReference>
<dbReference type="PDB" id="8FSK">
    <property type="method" value="X-ray"/>
    <property type="resolution" value="3.13 A"/>
    <property type="chains" value="B=308-443"/>
</dbReference>
<dbReference type="PDB" id="8GJ6">
    <property type="method" value="X-ray"/>
    <property type="resolution" value="2.77 A"/>
    <property type="chains" value="B=308-443"/>
</dbReference>
<dbReference type="PDB" id="8JF5">
    <property type="method" value="X-ray"/>
    <property type="resolution" value="3.20 A"/>
    <property type="chains" value="B=311-443"/>
</dbReference>
<dbReference type="PDB" id="8Q1G">
    <property type="method" value="X-ray"/>
    <property type="resolution" value="2.60 A"/>
    <property type="chains" value="B=308-485"/>
</dbReference>
<dbReference type="PDB" id="8Q1H">
    <property type="method" value="X-ray"/>
    <property type="resolution" value="2.90 A"/>
    <property type="chains" value="B=308-485"/>
</dbReference>
<dbReference type="PDB" id="8Q1J">
    <property type="method" value="X-ray"/>
    <property type="resolution" value="2.87 A"/>
    <property type="chains" value="B=308-485"/>
</dbReference>
<dbReference type="PDB" id="8UL6">
    <property type="method" value="X-ray"/>
    <property type="resolution" value="2.74 A"/>
    <property type="chains" value="B=308-443"/>
</dbReference>
<dbReference type="PDB" id="8UL8">
    <property type="method" value="X-ray"/>
    <property type="resolution" value="2.82 A"/>
    <property type="chains" value="B=308-443"/>
</dbReference>
<dbReference type="PDB" id="8ULB">
    <property type="method" value="X-ray"/>
    <property type="resolution" value="3.41 A"/>
    <property type="chains" value="B=308-443"/>
</dbReference>
<dbReference type="PDB" id="8ULC">
    <property type="method" value="X-ray"/>
    <property type="resolution" value="2.82 A"/>
    <property type="chains" value="B=308-443"/>
</dbReference>
<dbReference type="PDB" id="8UMQ">
    <property type="method" value="X-ray"/>
    <property type="resolution" value="3.26 A"/>
    <property type="chains" value="B=308-443"/>
</dbReference>
<dbReference type="PDB" id="8UNI">
    <property type="method" value="X-ray"/>
    <property type="resolution" value="3.40 A"/>
    <property type="chains" value="B=308-443"/>
</dbReference>
<dbReference type="PDB" id="8UOM">
    <property type="method" value="X-ray"/>
    <property type="resolution" value="3.20 A"/>
    <property type="chains" value="B=308-443"/>
</dbReference>
<dbReference type="PDB" id="8VOJ">
    <property type="method" value="EM"/>
    <property type="resolution" value="3.77 A"/>
    <property type="chains" value="D=86-485"/>
</dbReference>
<dbReference type="PDB" id="8VPQ">
    <property type="method" value="EM"/>
    <property type="resolution" value="3.30 A"/>
    <property type="chains" value="D=1-485"/>
</dbReference>
<dbReference type="PDB" id="8VRT">
    <property type="method" value="EM"/>
    <property type="resolution" value="3.42 A"/>
    <property type="chains" value="D=86-485"/>
</dbReference>
<dbReference type="PDB" id="8YM7">
    <property type="method" value="X-ray"/>
    <property type="resolution" value="2.83 A"/>
    <property type="chains" value="B=310-443"/>
</dbReference>
<dbReference type="PDB" id="9DTQ">
    <property type="method" value="EM"/>
    <property type="resolution" value="2.87 A"/>
    <property type="chains" value="D=86-485"/>
</dbReference>
<dbReference type="PDB" id="9DWU">
    <property type="method" value="EM"/>
    <property type="resolution" value="5.14 A"/>
    <property type="chains" value="B=311-379"/>
</dbReference>
<dbReference type="PDB" id="9EL7">
    <property type="method" value="X-ray"/>
    <property type="resolution" value="2.87 A"/>
    <property type="chains" value="B=308-443"/>
</dbReference>
<dbReference type="PDB" id="9EL8">
    <property type="method" value="X-ray"/>
    <property type="resolution" value="2.91 A"/>
    <property type="chains" value="B=308-443"/>
</dbReference>
<dbReference type="PDB" id="9ELA">
    <property type="method" value="X-ray"/>
    <property type="resolution" value="2.85 A"/>
    <property type="chains" value="B=308-443"/>
</dbReference>
<dbReference type="PDB" id="9FWG">
    <property type="method" value="X-ray"/>
    <property type="resolution" value="3.20 A"/>
    <property type="chains" value="B=1-485"/>
</dbReference>
<dbReference type="PDBsum" id="2IW5"/>
<dbReference type="PDBsum" id="2UXN"/>
<dbReference type="PDBsum" id="2UXX"/>
<dbReference type="PDBsum" id="2V1D"/>
<dbReference type="PDBsum" id="2X0L"/>
<dbReference type="PDBsum" id="2XAF"/>
<dbReference type="PDBsum" id="2XAG"/>
<dbReference type="PDBsum" id="2XAH"/>
<dbReference type="PDBsum" id="2XAJ"/>
<dbReference type="PDBsum" id="2XAQ"/>
<dbReference type="PDBsum" id="2XAS"/>
<dbReference type="PDBsum" id="2Y48"/>
<dbReference type="PDBsum" id="3ZMS"/>
<dbReference type="PDBsum" id="3ZMT"/>
<dbReference type="PDBsum" id="3ZMU"/>
<dbReference type="PDBsum" id="3ZMV"/>
<dbReference type="PDBsum" id="3ZMZ"/>
<dbReference type="PDBsum" id="3ZN0"/>
<dbReference type="PDBsum" id="3ZN1"/>
<dbReference type="PDBsum" id="4BAY"/>
<dbReference type="PDBsum" id="4KUM"/>
<dbReference type="PDBsum" id="4UV8"/>
<dbReference type="PDBsum" id="4UV9"/>
<dbReference type="PDBsum" id="4UVA"/>
<dbReference type="PDBsum" id="4UVB"/>
<dbReference type="PDBsum" id="4UVC"/>
<dbReference type="PDBsum" id="4UXN"/>
<dbReference type="PDBsum" id="4XBF"/>
<dbReference type="PDBsum" id="5H6Q"/>
<dbReference type="PDBsum" id="5H6R"/>
<dbReference type="PDBsum" id="5L3B"/>
<dbReference type="PDBsum" id="5L3C"/>
<dbReference type="PDBsum" id="5L3D"/>
<dbReference type="PDBsum" id="5L3E"/>
<dbReference type="PDBsum" id="5L3F"/>
<dbReference type="PDBsum" id="5L3G"/>
<dbReference type="PDBsum" id="5LBQ"/>
<dbReference type="PDBsum" id="5LGN"/>
<dbReference type="PDBsum" id="5LGT"/>
<dbReference type="PDBsum" id="5LGU"/>
<dbReference type="PDBsum" id="5LHG"/>
<dbReference type="PDBsum" id="5LHH"/>
<dbReference type="PDBsum" id="5LHI"/>
<dbReference type="PDBsum" id="5X60"/>
<dbReference type="PDBsum" id="5YJB"/>
<dbReference type="PDBsum" id="6K3E"/>
<dbReference type="PDBsum" id="6KGK"/>
<dbReference type="PDBsum" id="6KGL"/>
<dbReference type="PDBsum" id="6KGM"/>
<dbReference type="PDBsum" id="6KGN"/>
<dbReference type="PDBsum" id="6S35"/>
<dbReference type="PDBsum" id="6TE1"/>
<dbReference type="PDBsum" id="6TUY"/>
<dbReference type="PDBsum" id="6VYP"/>
<dbReference type="PDBsum" id="6W4K"/>
<dbReference type="PDBsum" id="6WC6"/>
<dbReference type="PDBsum" id="7CDC"/>
<dbReference type="PDBsum" id="7CDD"/>
<dbReference type="PDBsum" id="7CDE"/>
<dbReference type="PDBsum" id="7CDF"/>
<dbReference type="PDBsum" id="7CDG"/>
<dbReference type="PDBsum" id="7ZRY"/>
<dbReference type="PDBsum" id="8BOP"/>
<dbReference type="PDBsum" id="8BOX"/>
<dbReference type="PDBsum" id="8F2Z"/>
<dbReference type="PDBsum" id="8F30"/>
<dbReference type="PDBsum" id="8F59"/>
<dbReference type="PDBsum" id="8F6S"/>
<dbReference type="PDBsum" id="8FDV"/>
<dbReference type="PDBsum" id="8FJ4"/>
<dbReference type="PDBsum" id="8FJ7"/>
<dbReference type="PDBsum" id="8FQJ"/>
<dbReference type="PDBsum" id="8FRI"/>
<dbReference type="PDBsum" id="8FRQ"/>
<dbReference type="PDBsum" id="8FRV"/>
<dbReference type="PDBsum" id="8FSK"/>
<dbReference type="PDBsum" id="8GJ6"/>
<dbReference type="PDBsum" id="8JF5"/>
<dbReference type="PDBsum" id="8Q1G"/>
<dbReference type="PDBsum" id="8Q1H"/>
<dbReference type="PDBsum" id="8Q1J"/>
<dbReference type="PDBsum" id="8UL6"/>
<dbReference type="PDBsum" id="8UL8"/>
<dbReference type="PDBsum" id="8ULB"/>
<dbReference type="PDBsum" id="8ULC"/>
<dbReference type="PDBsum" id="8UMQ"/>
<dbReference type="PDBsum" id="8UNI"/>
<dbReference type="PDBsum" id="8UOM"/>
<dbReference type="PDBsum" id="8VOJ"/>
<dbReference type="PDBsum" id="8VPQ"/>
<dbReference type="PDBsum" id="8VRT"/>
<dbReference type="PDBsum" id="8YM7"/>
<dbReference type="PDBsum" id="9DTQ"/>
<dbReference type="PDBsum" id="9DWU"/>
<dbReference type="PDBsum" id="9EL7"/>
<dbReference type="PDBsum" id="9EL8"/>
<dbReference type="PDBsum" id="9ELA"/>
<dbReference type="PDBsum" id="9FWG"/>
<dbReference type="EMDB" id="EMD-43386"/>
<dbReference type="EMDB" id="EMD-43413"/>
<dbReference type="EMDB" id="EMD-43487"/>
<dbReference type="EMDB" id="EMD-47156"/>
<dbReference type="EMDB" id="EMD-47265"/>
<dbReference type="SASBDB" id="Q9UKL0"/>
<dbReference type="SMR" id="Q9UKL0"/>
<dbReference type="BioGRID" id="116796">
    <property type="interactions" value="505"/>
</dbReference>
<dbReference type="ComplexPortal" id="CPX-8943">
    <property type="entry name" value="CoREST transcriptional corepressor complex, RCOR1-HDAC1 variant"/>
</dbReference>
<dbReference type="ComplexPortal" id="CPX-9065">
    <property type="entry name" value="CoREST transcriptional corepressor complex, RCOR1-HDAC2 variant"/>
</dbReference>
<dbReference type="CORUM" id="Q9UKL0"/>
<dbReference type="DIP" id="DIP-35263N"/>
<dbReference type="FunCoup" id="Q9UKL0">
    <property type="interactions" value="2706"/>
</dbReference>
<dbReference type="IntAct" id="Q9UKL0">
    <property type="interactions" value="111"/>
</dbReference>
<dbReference type="MINT" id="Q9UKL0"/>
<dbReference type="STRING" id="9606.ENSP00000262241"/>
<dbReference type="BindingDB" id="Q9UKL0"/>
<dbReference type="ChEMBL" id="CHEMBL3137262"/>
<dbReference type="GlyGen" id="Q9UKL0">
    <property type="glycosylation" value="2 sites, 1 O-linked glycan (2 sites)"/>
</dbReference>
<dbReference type="iPTMnet" id="Q9UKL0"/>
<dbReference type="PhosphoSitePlus" id="Q9UKL0"/>
<dbReference type="BioMuta" id="RCOR1"/>
<dbReference type="DMDM" id="74762776"/>
<dbReference type="jPOST" id="Q9UKL0"/>
<dbReference type="MassIVE" id="Q9UKL0"/>
<dbReference type="PaxDb" id="9606-ENSP00000262241"/>
<dbReference type="PeptideAtlas" id="Q9UKL0"/>
<dbReference type="ProteomicsDB" id="84814"/>
<dbReference type="Pumba" id="Q9UKL0"/>
<dbReference type="ABCD" id="Q9UKL0">
    <property type="antibodies" value="2 sequenced antibodies"/>
</dbReference>
<dbReference type="Antibodypedia" id="4532">
    <property type="antibodies" value="284 antibodies from 34 providers"/>
</dbReference>
<dbReference type="DNASU" id="23186"/>
<dbReference type="Ensembl" id="ENST00000262241.7">
    <property type="protein sequence ID" value="ENSP00000262241.5"/>
    <property type="gene ID" value="ENSG00000089902.10"/>
</dbReference>
<dbReference type="GeneID" id="23186"/>
<dbReference type="KEGG" id="hsa:23186"/>
<dbReference type="MANE-Select" id="ENST00000262241.7">
    <property type="protein sequence ID" value="ENSP00000262241.5"/>
    <property type="RefSeq nucleotide sequence ID" value="NM_015156.4"/>
    <property type="RefSeq protein sequence ID" value="NP_055971.2"/>
</dbReference>
<dbReference type="UCSC" id="uc001ymb.5">
    <property type="organism name" value="human"/>
</dbReference>
<dbReference type="AGR" id="HGNC:17441"/>
<dbReference type="CTD" id="23186"/>
<dbReference type="DisGeNET" id="23186"/>
<dbReference type="GeneCards" id="RCOR1"/>
<dbReference type="HGNC" id="HGNC:17441">
    <property type="gene designation" value="RCOR1"/>
</dbReference>
<dbReference type="HPA" id="ENSG00000089902">
    <property type="expression patterns" value="Low tissue specificity"/>
</dbReference>
<dbReference type="MIM" id="607675">
    <property type="type" value="gene"/>
</dbReference>
<dbReference type="neXtProt" id="NX_Q9UKL0"/>
<dbReference type="OpenTargets" id="ENSG00000089902"/>
<dbReference type="PharmGKB" id="PA34305"/>
<dbReference type="VEuPathDB" id="HostDB:ENSG00000089902"/>
<dbReference type="eggNOG" id="KOG1194">
    <property type="taxonomic scope" value="Eukaryota"/>
</dbReference>
<dbReference type="GeneTree" id="ENSGT00940000155654"/>
<dbReference type="InParanoid" id="Q9UKL0"/>
<dbReference type="OMA" id="HFFVSYR"/>
<dbReference type="OrthoDB" id="10064338at2759"/>
<dbReference type="PAN-GO" id="Q9UKL0">
    <property type="GO annotations" value="6 GO annotations based on evolutionary models"/>
</dbReference>
<dbReference type="PhylomeDB" id="Q9UKL0"/>
<dbReference type="TreeFam" id="TF106450"/>
<dbReference type="PathwayCommons" id="Q9UKL0"/>
<dbReference type="Reactome" id="R-HSA-3214815">
    <property type="pathway name" value="HDACs deacetylate histones"/>
</dbReference>
<dbReference type="Reactome" id="R-HSA-8943724">
    <property type="pathway name" value="Regulation of PTEN gene transcription"/>
</dbReference>
<dbReference type="Reactome" id="R-HSA-9679191">
    <property type="pathway name" value="Potential therapeutics for SARS"/>
</dbReference>
<dbReference type="Reactome" id="R-HSA-983231">
    <property type="pathway name" value="Factors involved in megakaryocyte development and platelet production"/>
</dbReference>
<dbReference type="SignaLink" id="Q9UKL0"/>
<dbReference type="SIGNOR" id="Q9UKL0"/>
<dbReference type="BioGRID-ORCS" id="23186">
    <property type="hits" value="250 hits in 1194 CRISPR screens"/>
</dbReference>
<dbReference type="ChiTaRS" id="RCOR1">
    <property type="organism name" value="human"/>
</dbReference>
<dbReference type="EvolutionaryTrace" id="Q9UKL0"/>
<dbReference type="GeneWiki" id="RCOR1"/>
<dbReference type="GenomeRNAi" id="23186"/>
<dbReference type="Pharos" id="Q9UKL0">
    <property type="development level" value="Tbio"/>
</dbReference>
<dbReference type="PRO" id="PR:Q9UKL0"/>
<dbReference type="Proteomes" id="UP000005640">
    <property type="component" value="Chromosome 14"/>
</dbReference>
<dbReference type="RNAct" id="Q9UKL0">
    <property type="molecule type" value="protein"/>
</dbReference>
<dbReference type="Bgee" id="ENSG00000089902">
    <property type="expression patterns" value="Expressed in secondary oocyte and 202 other cell types or tissues"/>
</dbReference>
<dbReference type="ExpressionAtlas" id="Q9UKL0">
    <property type="expression patterns" value="baseline and differential"/>
</dbReference>
<dbReference type="GO" id="GO:1990391">
    <property type="term" value="C:DNA repair complex"/>
    <property type="evidence" value="ECO:0000314"/>
    <property type="project" value="MGI"/>
</dbReference>
<dbReference type="GO" id="GO:0000118">
    <property type="term" value="C:histone deacetylase complex"/>
    <property type="evidence" value="ECO:0000318"/>
    <property type="project" value="GO_Central"/>
</dbReference>
<dbReference type="GO" id="GO:0035097">
    <property type="term" value="C:histone methyltransferase complex"/>
    <property type="evidence" value="ECO:0000314"/>
    <property type="project" value="ARUK-UCL"/>
</dbReference>
<dbReference type="GO" id="GO:0005654">
    <property type="term" value="C:nucleoplasm"/>
    <property type="evidence" value="ECO:0000314"/>
    <property type="project" value="HPA"/>
</dbReference>
<dbReference type="GO" id="GO:0005634">
    <property type="term" value="C:nucleus"/>
    <property type="evidence" value="ECO:0000314"/>
    <property type="project" value="UniProtKB"/>
</dbReference>
<dbReference type="GO" id="GO:0005667">
    <property type="term" value="C:transcription regulator complex"/>
    <property type="evidence" value="ECO:0000318"/>
    <property type="project" value="GO_Central"/>
</dbReference>
<dbReference type="GO" id="GO:0017053">
    <property type="term" value="C:transcription repressor complex"/>
    <property type="evidence" value="ECO:0000314"/>
    <property type="project" value="UniProtKB"/>
</dbReference>
<dbReference type="GO" id="GO:0003682">
    <property type="term" value="F:chromatin binding"/>
    <property type="evidence" value="ECO:0007669"/>
    <property type="project" value="Ensembl"/>
</dbReference>
<dbReference type="GO" id="GO:0019899">
    <property type="term" value="F:enzyme binding"/>
    <property type="evidence" value="ECO:0007669"/>
    <property type="project" value="Ensembl"/>
</dbReference>
<dbReference type="GO" id="GO:0003714">
    <property type="term" value="F:transcription corepressor activity"/>
    <property type="evidence" value="ECO:0000318"/>
    <property type="project" value="GO_Central"/>
</dbReference>
<dbReference type="GO" id="GO:0006325">
    <property type="term" value="P:chromatin organization"/>
    <property type="evidence" value="ECO:0007669"/>
    <property type="project" value="UniProtKB-KW"/>
</dbReference>
<dbReference type="GO" id="GO:0030218">
    <property type="term" value="P:erythrocyte differentiation"/>
    <property type="evidence" value="ECO:0007669"/>
    <property type="project" value="Ensembl"/>
</dbReference>
<dbReference type="GO" id="GO:0045892">
    <property type="term" value="P:negative regulation of DNA-templated transcription"/>
    <property type="evidence" value="ECO:0000314"/>
    <property type="project" value="UniProtKB"/>
</dbReference>
<dbReference type="GO" id="GO:0010629">
    <property type="term" value="P:negative regulation of gene expression"/>
    <property type="evidence" value="ECO:0007669"/>
    <property type="project" value="Ensembl"/>
</dbReference>
<dbReference type="GO" id="GO:0045654">
    <property type="term" value="P:positive regulation of megakaryocyte differentiation"/>
    <property type="evidence" value="ECO:0007669"/>
    <property type="project" value="Ensembl"/>
</dbReference>
<dbReference type="GO" id="GO:0006357">
    <property type="term" value="P:regulation of transcription by RNA polymerase II"/>
    <property type="evidence" value="ECO:0000318"/>
    <property type="project" value="GO_Central"/>
</dbReference>
<dbReference type="CDD" id="cd00167">
    <property type="entry name" value="SANT"/>
    <property type="match status" value="1"/>
</dbReference>
<dbReference type="DisProt" id="DP02523"/>
<dbReference type="FunFam" id="1.20.58.1880:FF:000001">
    <property type="entry name" value="REST corepressor 1"/>
    <property type="match status" value="1"/>
</dbReference>
<dbReference type="FunFam" id="1.10.10.60:FF:000033">
    <property type="entry name" value="REST corepressor 3"/>
    <property type="match status" value="1"/>
</dbReference>
<dbReference type="FunFam" id="4.10.1240.50:FF:000002">
    <property type="entry name" value="REST corepressor isoform X1"/>
    <property type="match status" value="1"/>
</dbReference>
<dbReference type="Gene3D" id="1.20.58.1880">
    <property type="match status" value="1"/>
</dbReference>
<dbReference type="Gene3D" id="4.10.1240.50">
    <property type="match status" value="1"/>
</dbReference>
<dbReference type="Gene3D" id="1.10.10.60">
    <property type="entry name" value="Homeodomain-like"/>
    <property type="match status" value="1"/>
</dbReference>
<dbReference type="IDEAL" id="IID00422"/>
<dbReference type="InterPro" id="IPR000949">
    <property type="entry name" value="ELM2_dom"/>
</dbReference>
<dbReference type="InterPro" id="IPR009057">
    <property type="entry name" value="Homeodomain-like_sf"/>
</dbReference>
<dbReference type="InterPro" id="IPR049048">
    <property type="entry name" value="REST_helical"/>
</dbReference>
<dbReference type="InterPro" id="IPR001005">
    <property type="entry name" value="SANT/Myb"/>
</dbReference>
<dbReference type="InterPro" id="IPR017884">
    <property type="entry name" value="SANT_dom"/>
</dbReference>
<dbReference type="InterPro" id="IPR051066">
    <property type="entry name" value="Trans_reg/Corepressor"/>
</dbReference>
<dbReference type="PANTHER" id="PTHR16089:SF11">
    <property type="entry name" value="REST COREPRESSOR 1"/>
    <property type="match status" value="1"/>
</dbReference>
<dbReference type="PANTHER" id="PTHR16089">
    <property type="entry name" value="REST COREPRESSOR COREST PROTEIN-RELATED"/>
    <property type="match status" value="1"/>
</dbReference>
<dbReference type="Pfam" id="PF01448">
    <property type="entry name" value="ELM2"/>
    <property type="match status" value="1"/>
</dbReference>
<dbReference type="Pfam" id="PF00249">
    <property type="entry name" value="Myb_DNA-binding"/>
    <property type="match status" value="2"/>
</dbReference>
<dbReference type="Pfam" id="PF20878">
    <property type="entry name" value="REST_helical"/>
    <property type="match status" value="1"/>
</dbReference>
<dbReference type="SMART" id="SM01189">
    <property type="entry name" value="ELM2"/>
    <property type="match status" value="1"/>
</dbReference>
<dbReference type="SMART" id="SM00717">
    <property type="entry name" value="SANT"/>
    <property type="match status" value="2"/>
</dbReference>
<dbReference type="SUPFAM" id="SSF46689">
    <property type="entry name" value="Homeodomain-like"/>
    <property type="match status" value="2"/>
</dbReference>
<dbReference type="PROSITE" id="PS51156">
    <property type="entry name" value="ELM2"/>
    <property type="match status" value="1"/>
</dbReference>
<dbReference type="PROSITE" id="PS51293">
    <property type="entry name" value="SANT"/>
    <property type="match status" value="2"/>
</dbReference>
<gene>
    <name type="primary">RCOR1</name>
    <name type="synonym">KIAA0071</name>
    <name type="synonym">RCOR</name>
</gene>
<evidence type="ECO:0000250" key="1"/>
<evidence type="ECO:0000250" key="2">
    <source>
        <dbReference type="UniProtKB" id="Q8CFE3"/>
    </source>
</evidence>
<evidence type="ECO:0000255" key="3"/>
<evidence type="ECO:0000255" key="4">
    <source>
        <dbReference type="PROSITE-ProRule" id="PRU00512"/>
    </source>
</evidence>
<evidence type="ECO:0000255" key="5">
    <source>
        <dbReference type="PROSITE-ProRule" id="PRU00624"/>
    </source>
</evidence>
<evidence type="ECO:0000256" key="6">
    <source>
        <dbReference type="SAM" id="MobiDB-lite"/>
    </source>
</evidence>
<evidence type="ECO:0000269" key="7">
    <source>
    </source>
</evidence>
<evidence type="ECO:0000269" key="8">
    <source>
    </source>
</evidence>
<evidence type="ECO:0000269" key="9">
    <source>
    </source>
</evidence>
<evidence type="ECO:0000269" key="10">
    <source>
    </source>
</evidence>
<evidence type="ECO:0000269" key="11">
    <source>
    </source>
</evidence>
<evidence type="ECO:0000269" key="12">
    <source>
    </source>
</evidence>
<evidence type="ECO:0000269" key="13">
    <source>
    </source>
</evidence>
<evidence type="ECO:0000269" key="14">
    <source>
    </source>
</evidence>
<evidence type="ECO:0000269" key="15">
    <source>
    </source>
</evidence>
<evidence type="ECO:0000269" key="16">
    <source>
    </source>
</evidence>
<evidence type="ECO:0000269" key="17">
    <source>
    </source>
</evidence>
<evidence type="ECO:0000269" key="18">
    <source>
    </source>
</evidence>
<evidence type="ECO:0000269" key="19">
    <source>
    </source>
</evidence>
<evidence type="ECO:0000269" key="20">
    <source>
    </source>
</evidence>
<evidence type="ECO:0000305" key="21"/>
<evidence type="ECO:0007744" key="22">
    <source>
    </source>
</evidence>
<evidence type="ECO:0007744" key="23">
    <source>
    </source>
</evidence>
<evidence type="ECO:0007744" key="24">
    <source>
    </source>
</evidence>
<evidence type="ECO:0007744" key="25">
    <source>
    </source>
</evidence>
<evidence type="ECO:0007744" key="26">
    <source>
    </source>
</evidence>
<evidence type="ECO:0007744" key="27">
    <source>
    </source>
</evidence>
<evidence type="ECO:0007744" key="28">
    <source>
    </source>
</evidence>
<evidence type="ECO:0007829" key="29">
    <source>
        <dbReference type="PDB" id="5H6Q"/>
    </source>
</evidence>
<evidence type="ECO:0007829" key="30">
    <source>
        <dbReference type="PDB" id="5H6R"/>
    </source>
</evidence>
<evidence type="ECO:0007829" key="31">
    <source>
        <dbReference type="PDB" id="5LHI"/>
    </source>
</evidence>
<evidence type="ECO:0007829" key="32">
    <source>
        <dbReference type="PDB" id="7CDD"/>
    </source>
</evidence>
<evidence type="ECO:0007829" key="33">
    <source>
        <dbReference type="PDB" id="8FRV"/>
    </source>
</evidence>
<evidence type="ECO:0007829" key="34">
    <source>
        <dbReference type="PDB" id="8VPQ"/>
    </source>
</evidence>
<evidence type="ECO:0007829" key="35">
    <source>
        <dbReference type="PDB" id="9DTQ"/>
    </source>
</evidence>
<name>RCOR1_HUMAN</name>
<keyword id="KW-0002">3D-structure</keyword>
<keyword id="KW-0156">Chromatin regulator</keyword>
<keyword id="KW-0175">Coiled coil</keyword>
<keyword id="KW-0945">Host-virus interaction</keyword>
<keyword id="KW-1017">Isopeptide bond</keyword>
<keyword id="KW-0539">Nucleus</keyword>
<keyword id="KW-0597">Phosphoprotein</keyword>
<keyword id="KW-1267">Proteomics identification</keyword>
<keyword id="KW-1185">Reference proteome</keyword>
<keyword id="KW-0677">Repeat</keyword>
<keyword id="KW-0678">Repressor</keyword>
<keyword id="KW-0804">Transcription</keyword>
<keyword id="KW-0805">Transcription regulation</keyword>
<keyword id="KW-0832">Ubl conjugation</keyword>